<organism>
    <name type="scientific">Homo sapiens</name>
    <name type="common">Human</name>
    <dbReference type="NCBI Taxonomy" id="9606"/>
    <lineage>
        <taxon>Eukaryota</taxon>
        <taxon>Metazoa</taxon>
        <taxon>Chordata</taxon>
        <taxon>Craniata</taxon>
        <taxon>Vertebrata</taxon>
        <taxon>Euteleostomi</taxon>
        <taxon>Mammalia</taxon>
        <taxon>Eutheria</taxon>
        <taxon>Euarchontoglires</taxon>
        <taxon>Primates</taxon>
        <taxon>Haplorrhini</taxon>
        <taxon>Catarrhini</taxon>
        <taxon>Hominidae</taxon>
        <taxon>Homo</taxon>
    </lineage>
</organism>
<gene>
    <name evidence="2" type="primary">LINC01556</name>
    <name evidence="2" type="synonym">C6orf100</name>
</gene>
<comment type="sequence caution" evidence="1">
    <conflict type="erroneous initiation">
        <sequence resource="EMBL-CDS" id="CAC69878"/>
    </conflict>
</comment>
<protein>
    <recommendedName>
        <fullName evidence="2">Putative uncharacterized protein encoded by LINC01556</fullName>
    </recommendedName>
</protein>
<keyword id="KW-1185">Reference proteome</keyword>
<feature type="chain" id="PRO_0000309188" description="Putative uncharacterized protein encoded by LINC01556">
    <location>
        <begin position="1"/>
        <end position="62"/>
    </location>
</feature>
<feature type="sequence variant" id="VAR_036902" description="In dbSNP:rs2071790.">
    <original>G</original>
    <variation>E</variation>
    <location>
        <position position="41"/>
    </location>
</feature>
<evidence type="ECO:0000305" key="1"/>
<evidence type="ECO:0000312" key="2">
    <source>
        <dbReference type="HGNC" id="HGNC:21195"/>
    </source>
</evidence>
<proteinExistence type="predicted"/>
<dbReference type="EMBL" id="BX927167">
    <property type="status" value="NOT_ANNOTATED_CDS"/>
    <property type="molecule type" value="Genomic_DNA"/>
</dbReference>
<dbReference type="EMBL" id="Z84476">
    <property type="protein sequence ID" value="CAC69878.1"/>
    <property type="status" value="ALT_INIT"/>
    <property type="molecule type" value="Genomic_DNA"/>
</dbReference>
<dbReference type="EMBL" id="AL662871">
    <property type="status" value="NOT_ANNOTATED_CDS"/>
    <property type="molecule type" value="Genomic_DNA"/>
</dbReference>
<dbReference type="EMBL" id="AL954865">
    <property type="status" value="NOT_ANNOTATED_CDS"/>
    <property type="molecule type" value="Genomic_DNA"/>
</dbReference>
<dbReference type="EMBL" id="AL662865">
    <property type="status" value="NOT_ANNOTATED_CDS"/>
    <property type="molecule type" value="Genomic_DNA"/>
</dbReference>
<dbReference type="EMBL" id="BX248109">
    <property type="status" value="NOT_ANNOTATED_CDS"/>
    <property type="molecule type" value="Genomic_DNA"/>
</dbReference>
<dbReference type="EMBL" id="CR936883">
    <property type="status" value="NOT_ANNOTATED_CDS"/>
    <property type="molecule type" value="Genomic_DNA"/>
</dbReference>
<dbReference type="IntAct" id="Q5JQF7">
    <property type="interactions" value="1"/>
</dbReference>
<dbReference type="BioMuta" id="LINC01556"/>
<dbReference type="MassIVE" id="Q5JQF7"/>
<dbReference type="Ensembl" id="ENST00000383656.2">
    <property type="protein sequence ID" value="ENSP00000373152.2"/>
    <property type="gene ID" value="ENSG00000206526.2"/>
</dbReference>
<dbReference type="Ensembl" id="ENST00000421470.1">
    <property type="protein sequence ID" value="ENSP00000410635.1"/>
    <property type="gene ID" value="ENSG00000231041.1"/>
</dbReference>
<dbReference type="Ensembl" id="ENST00000434916.1">
    <property type="protein sequence ID" value="ENSP00000394134.1"/>
    <property type="gene ID" value="ENSG00000237313.1"/>
</dbReference>
<dbReference type="Ensembl" id="ENST00000438403.1">
    <property type="protein sequence ID" value="ENSP00000401725.1"/>
    <property type="gene ID" value="ENSG00000233566.1"/>
</dbReference>
<dbReference type="Ensembl" id="ENST00000438996.1">
    <property type="protein sequence ID" value="ENSP00000396675.1"/>
    <property type="gene ID" value="ENSG00000237634.1"/>
</dbReference>
<dbReference type="UCSC" id="uc063tqn.1">
    <property type="organism name" value="human"/>
</dbReference>
<dbReference type="AGR" id="HGNC:21195"/>
<dbReference type="GeneCards" id="LINC01556"/>
<dbReference type="HGNC" id="HGNC:21195">
    <property type="gene designation" value="LINC01556"/>
</dbReference>
<dbReference type="neXtProt" id="NX_Q5JQF7"/>
<dbReference type="InParanoid" id="Q5JQF7"/>
<dbReference type="PAN-GO" id="Q5JQF7">
    <property type="GO annotations" value="0 GO annotations based on evolutionary models"/>
</dbReference>
<dbReference type="PhylomeDB" id="Q5JQF7"/>
<dbReference type="TreeFam" id="TF341497"/>
<dbReference type="PathwayCommons" id="Q5JQF7"/>
<dbReference type="SignaLink" id="Q5JQF7"/>
<dbReference type="Pharos" id="Q5JQF7">
    <property type="development level" value="Tdark"/>
</dbReference>
<dbReference type="PRO" id="PR:Q5JQF7"/>
<dbReference type="Proteomes" id="UP000005640">
    <property type="component" value="Unplaced"/>
</dbReference>
<dbReference type="RNAct" id="Q5JQF7">
    <property type="molecule type" value="protein"/>
</dbReference>
<accession>Q5JQF7</accession>
<accession>B0S7Y3</accession>
<accession>B0V298</accession>
<accession>Q5SNN6</accession>
<accession>Q96KW1</accession>
<reference key="1">
    <citation type="journal article" date="2003" name="Nature">
        <title>The DNA sequence and analysis of human chromosome 6.</title>
        <authorList>
            <person name="Mungall A.J."/>
            <person name="Palmer S.A."/>
            <person name="Sims S.K."/>
            <person name="Edwards C.A."/>
            <person name="Ashurst J.L."/>
            <person name="Wilming L."/>
            <person name="Jones M.C."/>
            <person name="Horton R."/>
            <person name="Hunt S.E."/>
            <person name="Scott C.E."/>
            <person name="Gilbert J.G.R."/>
            <person name="Clamp M.E."/>
            <person name="Bethel G."/>
            <person name="Milne S."/>
            <person name="Ainscough R."/>
            <person name="Almeida J.P."/>
            <person name="Ambrose K.D."/>
            <person name="Andrews T.D."/>
            <person name="Ashwell R.I.S."/>
            <person name="Babbage A.K."/>
            <person name="Bagguley C.L."/>
            <person name="Bailey J."/>
            <person name="Banerjee R."/>
            <person name="Barker D.J."/>
            <person name="Barlow K.F."/>
            <person name="Bates K."/>
            <person name="Beare D.M."/>
            <person name="Beasley H."/>
            <person name="Beasley O."/>
            <person name="Bird C.P."/>
            <person name="Blakey S.E."/>
            <person name="Bray-Allen S."/>
            <person name="Brook J."/>
            <person name="Brown A.J."/>
            <person name="Brown J.Y."/>
            <person name="Burford D.C."/>
            <person name="Burrill W."/>
            <person name="Burton J."/>
            <person name="Carder C."/>
            <person name="Carter N.P."/>
            <person name="Chapman J.C."/>
            <person name="Clark S.Y."/>
            <person name="Clark G."/>
            <person name="Clee C.M."/>
            <person name="Clegg S."/>
            <person name="Cobley V."/>
            <person name="Collier R.E."/>
            <person name="Collins J.E."/>
            <person name="Colman L.K."/>
            <person name="Corby N.R."/>
            <person name="Coville G.J."/>
            <person name="Culley K.M."/>
            <person name="Dhami P."/>
            <person name="Davies J."/>
            <person name="Dunn M."/>
            <person name="Earthrowl M.E."/>
            <person name="Ellington A.E."/>
            <person name="Evans K.A."/>
            <person name="Faulkner L."/>
            <person name="Francis M.D."/>
            <person name="Frankish A."/>
            <person name="Frankland J."/>
            <person name="French L."/>
            <person name="Garner P."/>
            <person name="Garnett J."/>
            <person name="Ghori M.J."/>
            <person name="Gilby L.M."/>
            <person name="Gillson C.J."/>
            <person name="Glithero R.J."/>
            <person name="Grafham D.V."/>
            <person name="Grant M."/>
            <person name="Gribble S."/>
            <person name="Griffiths C."/>
            <person name="Griffiths M.N.D."/>
            <person name="Hall R."/>
            <person name="Halls K.S."/>
            <person name="Hammond S."/>
            <person name="Harley J.L."/>
            <person name="Hart E.A."/>
            <person name="Heath P.D."/>
            <person name="Heathcott R."/>
            <person name="Holmes S.J."/>
            <person name="Howden P.J."/>
            <person name="Howe K.L."/>
            <person name="Howell G.R."/>
            <person name="Huckle E."/>
            <person name="Humphray S.J."/>
            <person name="Humphries M.D."/>
            <person name="Hunt A.R."/>
            <person name="Johnson C.M."/>
            <person name="Joy A.A."/>
            <person name="Kay M."/>
            <person name="Keenan S.J."/>
            <person name="Kimberley A.M."/>
            <person name="King A."/>
            <person name="Laird G.K."/>
            <person name="Langford C."/>
            <person name="Lawlor S."/>
            <person name="Leongamornlert D.A."/>
            <person name="Leversha M."/>
            <person name="Lloyd C.R."/>
            <person name="Lloyd D.M."/>
            <person name="Loveland J.E."/>
            <person name="Lovell J."/>
            <person name="Martin S."/>
            <person name="Mashreghi-Mohammadi M."/>
            <person name="Maslen G.L."/>
            <person name="Matthews L."/>
            <person name="McCann O.T."/>
            <person name="McLaren S.J."/>
            <person name="McLay K."/>
            <person name="McMurray A."/>
            <person name="Moore M.J.F."/>
            <person name="Mullikin J.C."/>
            <person name="Niblett D."/>
            <person name="Nickerson T."/>
            <person name="Novik K.L."/>
            <person name="Oliver K."/>
            <person name="Overton-Larty E.K."/>
            <person name="Parker A."/>
            <person name="Patel R."/>
            <person name="Pearce A.V."/>
            <person name="Peck A.I."/>
            <person name="Phillimore B.J.C.T."/>
            <person name="Phillips S."/>
            <person name="Plumb R.W."/>
            <person name="Porter K.M."/>
            <person name="Ramsey Y."/>
            <person name="Ranby S.A."/>
            <person name="Rice C.M."/>
            <person name="Ross M.T."/>
            <person name="Searle S.M."/>
            <person name="Sehra H.K."/>
            <person name="Sheridan E."/>
            <person name="Skuce C.D."/>
            <person name="Smith S."/>
            <person name="Smith M."/>
            <person name="Spraggon L."/>
            <person name="Squares S.L."/>
            <person name="Steward C.A."/>
            <person name="Sycamore N."/>
            <person name="Tamlyn-Hall G."/>
            <person name="Tester J."/>
            <person name="Theaker A.J."/>
            <person name="Thomas D.W."/>
            <person name="Thorpe A."/>
            <person name="Tracey A."/>
            <person name="Tromans A."/>
            <person name="Tubby B."/>
            <person name="Wall M."/>
            <person name="Wallis J.M."/>
            <person name="West A.P."/>
            <person name="White S.S."/>
            <person name="Whitehead S.L."/>
            <person name="Whittaker H."/>
            <person name="Wild A."/>
            <person name="Willey D.J."/>
            <person name="Wilmer T.E."/>
            <person name="Wood J.M."/>
            <person name="Wray P.W."/>
            <person name="Wyatt J.C."/>
            <person name="Young L."/>
            <person name="Younger R.M."/>
            <person name="Bentley D.R."/>
            <person name="Coulson A."/>
            <person name="Durbin R.M."/>
            <person name="Hubbard T."/>
            <person name="Sulston J.E."/>
            <person name="Dunham I."/>
            <person name="Rogers J."/>
            <person name="Beck S."/>
        </authorList>
    </citation>
    <scope>NUCLEOTIDE SEQUENCE [LARGE SCALE GENOMIC DNA]</scope>
</reference>
<name>CF100_HUMAN</name>
<sequence>MLQVVQEGNPAPFIINTVKRGRRDRERQRTPWAPHPLGFQGRRYIYESPNHRGKDSSFLAQK</sequence>